<evidence type="ECO:0000255" key="1">
    <source>
        <dbReference type="PROSITE-ProRule" id="PRU01020"/>
    </source>
</evidence>
<comment type="catalytic activity">
    <reaction>
        <text>(3,5-dichloro-2,4,6-trihydroxyphenyl)hexan-1-one + S-adenosyl-L-methionine = 1-(3,5-dichloro-2,6-dihydroxy-4-methoxyphenyl)hexan-1-one + S-adenosyl-L-homocysteine + H(+)</text>
        <dbReference type="Rhea" id="RHEA:48396"/>
        <dbReference type="ChEBI" id="CHEBI:15378"/>
        <dbReference type="ChEBI" id="CHEBI:57856"/>
        <dbReference type="ChEBI" id="CHEBI:59789"/>
        <dbReference type="ChEBI" id="CHEBI:90397"/>
        <dbReference type="ChEBI" id="CHEBI:90398"/>
    </reaction>
</comment>
<comment type="similarity">
    <text evidence="1">Belongs to the class I-like SAM-binding methyltransferase superfamily. Cation-independent O-methyltransferase family. COMT subfamily.</text>
</comment>
<keyword id="KW-0489">Methyltransferase</keyword>
<keyword id="KW-1185">Reference proteome</keyword>
<keyword id="KW-0949">S-adenosyl-L-methionine</keyword>
<keyword id="KW-0808">Transferase</keyword>
<protein>
    <recommendedName>
        <fullName>O-methyltransferase 10</fullName>
        <ecNumber>2.1.1.-</ecNumber>
    </recommendedName>
</protein>
<proteinExistence type="inferred from homology"/>
<feature type="chain" id="PRO_0000371323" description="O-methyltransferase 10">
    <location>
        <begin position="1"/>
        <end position="437"/>
    </location>
</feature>
<feature type="active site" description="Proton acceptor" evidence="1">
    <location>
        <position position="335"/>
    </location>
</feature>
<feature type="binding site" evidence="1">
    <location>
        <position position="259"/>
    </location>
    <ligand>
        <name>S-adenosyl-L-methionine</name>
        <dbReference type="ChEBI" id="CHEBI:59789"/>
    </ligand>
</feature>
<feature type="binding site" evidence="1">
    <location>
        <position position="282"/>
    </location>
    <ligand>
        <name>S-adenosyl-L-methionine</name>
        <dbReference type="ChEBI" id="CHEBI:59789"/>
    </ligand>
</feature>
<feature type="binding site" evidence="1">
    <location>
        <position position="315"/>
    </location>
    <ligand>
        <name>S-adenosyl-L-methionine</name>
        <dbReference type="ChEBI" id="CHEBI:59789"/>
    </ligand>
</feature>
<feature type="binding site" evidence="1">
    <location>
        <position position="316"/>
    </location>
    <ligand>
        <name>S-adenosyl-L-methionine</name>
        <dbReference type="ChEBI" id="CHEBI:59789"/>
    </ligand>
</feature>
<gene>
    <name type="primary">omt10</name>
    <name type="ORF">DDB_G0290719</name>
</gene>
<accession>Q54FP4</accession>
<name>OMT10_DICDI</name>
<dbReference type="EC" id="2.1.1.-"/>
<dbReference type="EMBL" id="AAFI02000168">
    <property type="protein sequence ID" value="EAL62082.2"/>
    <property type="molecule type" value="Genomic_DNA"/>
</dbReference>
<dbReference type="RefSeq" id="XP_635585.3">
    <property type="nucleotide sequence ID" value="XM_630493.2"/>
</dbReference>
<dbReference type="SMR" id="Q54FP4"/>
<dbReference type="PaxDb" id="44689-DDB0266735"/>
<dbReference type="GeneID" id="8627793"/>
<dbReference type="KEGG" id="ddi:DDB_G0290719"/>
<dbReference type="dictyBase" id="DDB_G0290719">
    <property type="gene designation" value="omt10"/>
</dbReference>
<dbReference type="VEuPathDB" id="AmoebaDB:DDB_G0290719"/>
<dbReference type="eggNOG" id="KOG3178">
    <property type="taxonomic scope" value="Eukaryota"/>
</dbReference>
<dbReference type="HOGENOM" id="CLU_627671_0_0_1"/>
<dbReference type="InParanoid" id="Q54FP4"/>
<dbReference type="OMA" id="ERCISHR"/>
<dbReference type="PhylomeDB" id="Q54FP4"/>
<dbReference type="PRO" id="PR:Q54FP4"/>
<dbReference type="Proteomes" id="UP000002195">
    <property type="component" value="Chromosome 5"/>
</dbReference>
<dbReference type="GO" id="GO:0106268">
    <property type="term" value="F:3,5-dichloro-THPH methyl transferase activity"/>
    <property type="evidence" value="ECO:0007669"/>
    <property type="project" value="RHEA"/>
</dbReference>
<dbReference type="GO" id="GO:0008171">
    <property type="term" value="F:O-methyltransferase activity"/>
    <property type="evidence" value="ECO:0000318"/>
    <property type="project" value="GO_Central"/>
</dbReference>
<dbReference type="GO" id="GO:0046983">
    <property type="term" value="F:protein dimerization activity"/>
    <property type="evidence" value="ECO:0007669"/>
    <property type="project" value="InterPro"/>
</dbReference>
<dbReference type="GO" id="GO:0008757">
    <property type="term" value="F:S-adenosylmethionine-dependent methyltransferase activity"/>
    <property type="evidence" value="ECO:0000318"/>
    <property type="project" value="GO_Central"/>
</dbReference>
<dbReference type="GO" id="GO:0009058">
    <property type="term" value="P:biosynthetic process"/>
    <property type="evidence" value="ECO:0000318"/>
    <property type="project" value="GO_Central"/>
</dbReference>
<dbReference type="GO" id="GO:0032259">
    <property type="term" value="P:methylation"/>
    <property type="evidence" value="ECO:0000318"/>
    <property type="project" value="GO_Central"/>
</dbReference>
<dbReference type="Gene3D" id="3.40.50.150">
    <property type="entry name" value="Vaccinia Virus protein VP39"/>
    <property type="match status" value="1"/>
</dbReference>
<dbReference type="Gene3D" id="1.10.10.10">
    <property type="entry name" value="Winged helix-like DNA-binding domain superfamily/Winged helix DNA-binding domain"/>
    <property type="match status" value="1"/>
</dbReference>
<dbReference type="InterPro" id="IPR016461">
    <property type="entry name" value="COMT-like"/>
</dbReference>
<dbReference type="InterPro" id="IPR001077">
    <property type="entry name" value="O_MeTrfase_dom"/>
</dbReference>
<dbReference type="InterPro" id="IPR012967">
    <property type="entry name" value="Plant_O-MeTrfase_dimerisation"/>
</dbReference>
<dbReference type="InterPro" id="IPR029063">
    <property type="entry name" value="SAM-dependent_MTases_sf"/>
</dbReference>
<dbReference type="InterPro" id="IPR036388">
    <property type="entry name" value="WH-like_DNA-bd_sf"/>
</dbReference>
<dbReference type="InterPro" id="IPR036390">
    <property type="entry name" value="WH_DNA-bd_sf"/>
</dbReference>
<dbReference type="PANTHER" id="PTHR43712:SF2">
    <property type="entry name" value="O-METHYLTRANSFERASE CICE"/>
    <property type="match status" value="1"/>
</dbReference>
<dbReference type="PANTHER" id="PTHR43712">
    <property type="entry name" value="PUTATIVE (AFU_ORTHOLOGUE AFUA_4G14580)-RELATED"/>
    <property type="match status" value="1"/>
</dbReference>
<dbReference type="Pfam" id="PF08100">
    <property type="entry name" value="Dimerisation"/>
    <property type="match status" value="1"/>
</dbReference>
<dbReference type="Pfam" id="PF00891">
    <property type="entry name" value="Methyltransf_2"/>
    <property type="match status" value="1"/>
</dbReference>
<dbReference type="SUPFAM" id="SSF53335">
    <property type="entry name" value="S-adenosyl-L-methionine-dependent methyltransferases"/>
    <property type="match status" value="1"/>
</dbReference>
<dbReference type="SUPFAM" id="SSF46785">
    <property type="entry name" value="Winged helix' DNA-binding domain"/>
    <property type="match status" value="1"/>
</dbReference>
<dbReference type="PROSITE" id="PS51683">
    <property type="entry name" value="SAM_OMT_II"/>
    <property type="match status" value="1"/>
</dbReference>
<organism>
    <name type="scientific">Dictyostelium discoideum</name>
    <name type="common">Social amoeba</name>
    <dbReference type="NCBI Taxonomy" id="44689"/>
    <lineage>
        <taxon>Eukaryota</taxon>
        <taxon>Amoebozoa</taxon>
        <taxon>Evosea</taxon>
        <taxon>Eumycetozoa</taxon>
        <taxon>Dictyostelia</taxon>
        <taxon>Dictyosteliales</taxon>
        <taxon>Dictyosteliaceae</taxon>
        <taxon>Dictyostelium</taxon>
    </lineage>
</organism>
<sequence length="437" mass="49896">MEGVLSSLLASSLIVGFPSLIFVCSILIYYYLCVMKKKISSKDSLPPVIGVYIMRCIYSITQYWEMIIPQIKLYRISNDYIVFQCLSVVFTLKVMDYLKDGPKTIRELSQLTKSSEKNLFRVMRALTQEHIFNYNQSNQTFSLNSCSKLLTSPPPPSSSPFEQNGILSTNDEELGCIFSMLSYPTFIDAWRSLKECIESGVSGFQAKHGMTFFQYIDEKDTYIKKIFDSAMRQSYATKIHTQIINGYDFSKYKKVCDIGGGIGFLGFEIVNHNANTCVCVLELEETVRNGLEQSKVDEKKQRIIEEQRLVFKTGNMFIPRSIPSANLYIMMQVIHDWNNNDAIKILSSVASTMRMERNHTGQSPKLLIIDSILDDNINNDTYKRSCIPDIIMMAIVGGEERTLSQWGHIIKESGLQVLTIKKFNRPPFLSLIELTIQ</sequence>
<reference key="1">
    <citation type="journal article" date="2005" name="Nature">
        <title>The genome of the social amoeba Dictyostelium discoideum.</title>
        <authorList>
            <person name="Eichinger L."/>
            <person name="Pachebat J.A."/>
            <person name="Gloeckner G."/>
            <person name="Rajandream M.A."/>
            <person name="Sucgang R."/>
            <person name="Berriman M."/>
            <person name="Song J."/>
            <person name="Olsen R."/>
            <person name="Szafranski K."/>
            <person name="Xu Q."/>
            <person name="Tunggal B."/>
            <person name="Kummerfeld S."/>
            <person name="Madera M."/>
            <person name="Konfortov B.A."/>
            <person name="Rivero F."/>
            <person name="Bankier A.T."/>
            <person name="Lehmann R."/>
            <person name="Hamlin N."/>
            <person name="Davies R."/>
            <person name="Gaudet P."/>
            <person name="Fey P."/>
            <person name="Pilcher K."/>
            <person name="Chen G."/>
            <person name="Saunders D."/>
            <person name="Sodergren E.J."/>
            <person name="Davis P."/>
            <person name="Kerhornou A."/>
            <person name="Nie X."/>
            <person name="Hall N."/>
            <person name="Anjard C."/>
            <person name="Hemphill L."/>
            <person name="Bason N."/>
            <person name="Farbrother P."/>
            <person name="Desany B."/>
            <person name="Just E."/>
            <person name="Morio T."/>
            <person name="Rost R."/>
            <person name="Churcher C.M."/>
            <person name="Cooper J."/>
            <person name="Haydock S."/>
            <person name="van Driessche N."/>
            <person name="Cronin A."/>
            <person name="Goodhead I."/>
            <person name="Muzny D.M."/>
            <person name="Mourier T."/>
            <person name="Pain A."/>
            <person name="Lu M."/>
            <person name="Harper D."/>
            <person name="Lindsay R."/>
            <person name="Hauser H."/>
            <person name="James K.D."/>
            <person name="Quiles M."/>
            <person name="Madan Babu M."/>
            <person name="Saito T."/>
            <person name="Buchrieser C."/>
            <person name="Wardroper A."/>
            <person name="Felder M."/>
            <person name="Thangavelu M."/>
            <person name="Johnson D."/>
            <person name="Knights A."/>
            <person name="Loulseged H."/>
            <person name="Mungall K.L."/>
            <person name="Oliver K."/>
            <person name="Price C."/>
            <person name="Quail M.A."/>
            <person name="Urushihara H."/>
            <person name="Hernandez J."/>
            <person name="Rabbinowitsch E."/>
            <person name="Steffen D."/>
            <person name="Sanders M."/>
            <person name="Ma J."/>
            <person name="Kohara Y."/>
            <person name="Sharp S."/>
            <person name="Simmonds M.N."/>
            <person name="Spiegler S."/>
            <person name="Tivey A."/>
            <person name="Sugano S."/>
            <person name="White B."/>
            <person name="Walker D."/>
            <person name="Woodward J.R."/>
            <person name="Winckler T."/>
            <person name="Tanaka Y."/>
            <person name="Shaulsky G."/>
            <person name="Schleicher M."/>
            <person name="Weinstock G.M."/>
            <person name="Rosenthal A."/>
            <person name="Cox E.C."/>
            <person name="Chisholm R.L."/>
            <person name="Gibbs R.A."/>
            <person name="Loomis W.F."/>
            <person name="Platzer M."/>
            <person name="Kay R.R."/>
            <person name="Williams J.G."/>
            <person name="Dear P.H."/>
            <person name="Noegel A.A."/>
            <person name="Barrell B.G."/>
            <person name="Kuspa A."/>
        </authorList>
    </citation>
    <scope>NUCLEOTIDE SEQUENCE [LARGE SCALE GENOMIC DNA]</scope>
    <source>
        <strain>AX4</strain>
    </source>
</reference>